<feature type="chain" id="PRO_0000374834" description="Ribosomal protein uS12 methylthiotransferase RimO">
    <location>
        <begin position="1"/>
        <end position="431"/>
    </location>
</feature>
<feature type="domain" description="MTTase N-terminal" evidence="1">
    <location>
        <begin position="4"/>
        <end position="120"/>
    </location>
</feature>
<feature type="domain" description="Radical SAM core" evidence="2">
    <location>
        <begin position="136"/>
        <end position="365"/>
    </location>
</feature>
<feature type="domain" description="TRAM" evidence="1">
    <location>
        <begin position="368"/>
        <end position="431"/>
    </location>
</feature>
<feature type="binding site" evidence="1">
    <location>
        <position position="13"/>
    </location>
    <ligand>
        <name>[4Fe-4S] cluster</name>
        <dbReference type="ChEBI" id="CHEBI:49883"/>
        <label>1</label>
    </ligand>
</feature>
<feature type="binding site" evidence="1">
    <location>
        <position position="49"/>
    </location>
    <ligand>
        <name>[4Fe-4S] cluster</name>
        <dbReference type="ChEBI" id="CHEBI:49883"/>
        <label>1</label>
    </ligand>
</feature>
<feature type="binding site" evidence="1">
    <location>
        <position position="83"/>
    </location>
    <ligand>
        <name>[4Fe-4S] cluster</name>
        <dbReference type="ChEBI" id="CHEBI:49883"/>
        <label>1</label>
    </ligand>
</feature>
<feature type="binding site" evidence="1">
    <location>
        <position position="150"/>
    </location>
    <ligand>
        <name>[4Fe-4S] cluster</name>
        <dbReference type="ChEBI" id="CHEBI:49883"/>
        <label>2</label>
        <note>4Fe-4S-S-AdoMet</note>
    </ligand>
</feature>
<feature type="binding site" evidence="1">
    <location>
        <position position="154"/>
    </location>
    <ligand>
        <name>[4Fe-4S] cluster</name>
        <dbReference type="ChEBI" id="CHEBI:49883"/>
        <label>2</label>
        <note>4Fe-4S-S-AdoMet</note>
    </ligand>
</feature>
<feature type="binding site" evidence="1">
    <location>
        <position position="157"/>
    </location>
    <ligand>
        <name>[4Fe-4S] cluster</name>
        <dbReference type="ChEBI" id="CHEBI:49883"/>
        <label>2</label>
        <note>4Fe-4S-S-AdoMet</note>
    </ligand>
</feature>
<organism>
    <name type="scientific">Fervidobacterium nodosum (strain ATCC 35602 / DSM 5306 / Rt17-B1)</name>
    <dbReference type="NCBI Taxonomy" id="381764"/>
    <lineage>
        <taxon>Bacteria</taxon>
        <taxon>Thermotogati</taxon>
        <taxon>Thermotogota</taxon>
        <taxon>Thermotogae</taxon>
        <taxon>Thermotogales</taxon>
        <taxon>Fervidobacteriaceae</taxon>
        <taxon>Fervidobacterium</taxon>
    </lineage>
</organism>
<proteinExistence type="inferred from homology"/>
<evidence type="ECO:0000255" key="1">
    <source>
        <dbReference type="HAMAP-Rule" id="MF_01865"/>
    </source>
</evidence>
<evidence type="ECO:0000255" key="2">
    <source>
        <dbReference type="PROSITE-ProRule" id="PRU01266"/>
    </source>
</evidence>
<sequence>MAFLKLYVIVLGCAKNEADFSLFKYHLKQLGHEVVDDVEDADGVVIDTCGFIVDAKQESIDTILEFASIKKQKPDFKVYVTGCLVQRYPKDLPLEIPEVDGWFGVIPPKNLAESINKTKKYITDPVAVYEFEGRVDSDLPYAYVKIADGCDRACTFCTIPKFKGGFVSRKLEDIEKEVRYLIENGKKEIVLVAQDTTGYGVDLYGKQMLPELLKRINDIDGNFWIRVMYMHPDHVTDEILKGFSYEKVVKYFDIPIQHSSDNILKLMGRTKSTKELEELFDKIRSLYPQAVLRTSIIVGFPGETKDDFEQLIDFIRTIEFDRLGGFVYSDEEDAASYNLPNKVSLKTAQKRLDTLMEVQAEISFLRNQRLVGKVIDVLFEEEVNGVIIGRSYMDAPEVDGNVFVKGHGINRFGKVKITEADTYDLEGELVE</sequence>
<name>RIMO_FERNB</name>
<protein>
    <recommendedName>
        <fullName evidence="1">Ribosomal protein uS12 methylthiotransferase RimO</fullName>
        <shortName evidence="1">uS12 MTTase</shortName>
        <shortName evidence="1">uS12 methylthiotransferase</shortName>
        <ecNumber evidence="1">2.8.4.4</ecNumber>
    </recommendedName>
    <alternativeName>
        <fullName evidence="1">Ribosomal protein uS12 (aspartate-C(3))-methylthiotransferase</fullName>
    </alternativeName>
    <alternativeName>
        <fullName evidence="1">Ribosome maturation factor RimO</fullName>
    </alternativeName>
</protein>
<comment type="function">
    <text evidence="1">Catalyzes the methylthiolation of an aspartic acid residue of ribosomal protein uS12.</text>
</comment>
<comment type="catalytic activity">
    <reaction evidence="1">
        <text>L-aspartate(89)-[ribosomal protein uS12]-hydrogen + (sulfur carrier)-SH + AH2 + 2 S-adenosyl-L-methionine = 3-methylsulfanyl-L-aspartate(89)-[ribosomal protein uS12]-hydrogen + (sulfur carrier)-H + 5'-deoxyadenosine + L-methionine + A + S-adenosyl-L-homocysteine + 2 H(+)</text>
        <dbReference type="Rhea" id="RHEA:37087"/>
        <dbReference type="Rhea" id="RHEA-COMP:10460"/>
        <dbReference type="Rhea" id="RHEA-COMP:10461"/>
        <dbReference type="Rhea" id="RHEA-COMP:14737"/>
        <dbReference type="Rhea" id="RHEA-COMP:14739"/>
        <dbReference type="ChEBI" id="CHEBI:13193"/>
        <dbReference type="ChEBI" id="CHEBI:15378"/>
        <dbReference type="ChEBI" id="CHEBI:17319"/>
        <dbReference type="ChEBI" id="CHEBI:17499"/>
        <dbReference type="ChEBI" id="CHEBI:29917"/>
        <dbReference type="ChEBI" id="CHEBI:29961"/>
        <dbReference type="ChEBI" id="CHEBI:57844"/>
        <dbReference type="ChEBI" id="CHEBI:57856"/>
        <dbReference type="ChEBI" id="CHEBI:59789"/>
        <dbReference type="ChEBI" id="CHEBI:64428"/>
        <dbReference type="ChEBI" id="CHEBI:73599"/>
        <dbReference type="EC" id="2.8.4.4"/>
    </reaction>
</comment>
<comment type="cofactor">
    <cofactor evidence="1">
        <name>[4Fe-4S] cluster</name>
        <dbReference type="ChEBI" id="CHEBI:49883"/>
    </cofactor>
    <text evidence="1">Binds 2 [4Fe-4S] clusters. One cluster is coordinated with 3 cysteines and an exchangeable S-adenosyl-L-methionine.</text>
</comment>
<comment type="subcellular location">
    <subcellularLocation>
        <location evidence="1">Cytoplasm</location>
    </subcellularLocation>
</comment>
<comment type="similarity">
    <text evidence="1">Belongs to the methylthiotransferase family. RimO subfamily.</text>
</comment>
<accession>A7HMK2</accession>
<gene>
    <name evidence="1" type="primary">rimO</name>
    <name type="ordered locus">Fnod_1288</name>
</gene>
<dbReference type="EC" id="2.8.4.4" evidence="1"/>
<dbReference type="EMBL" id="CP000771">
    <property type="protein sequence ID" value="ABS61135.1"/>
    <property type="molecule type" value="Genomic_DNA"/>
</dbReference>
<dbReference type="SMR" id="A7HMK2"/>
<dbReference type="STRING" id="381764.Fnod_1288"/>
<dbReference type="KEGG" id="fno:Fnod_1288"/>
<dbReference type="eggNOG" id="COG0621">
    <property type="taxonomic scope" value="Bacteria"/>
</dbReference>
<dbReference type="HOGENOM" id="CLU_018697_0_1_0"/>
<dbReference type="OrthoDB" id="9805215at2"/>
<dbReference type="Proteomes" id="UP000002415">
    <property type="component" value="Chromosome"/>
</dbReference>
<dbReference type="GO" id="GO:0005829">
    <property type="term" value="C:cytosol"/>
    <property type="evidence" value="ECO:0007669"/>
    <property type="project" value="TreeGrafter"/>
</dbReference>
<dbReference type="GO" id="GO:0051539">
    <property type="term" value="F:4 iron, 4 sulfur cluster binding"/>
    <property type="evidence" value="ECO:0007669"/>
    <property type="project" value="UniProtKB-UniRule"/>
</dbReference>
<dbReference type="GO" id="GO:0035599">
    <property type="term" value="F:aspartic acid methylthiotransferase activity"/>
    <property type="evidence" value="ECO:0007669"/>
    <property type="project" value="TreeGrafter"/>
</dbReference>
<dbReference type="GO" id="GO:0046872">
    <property type="term" value="F:metal ion binding"/>
    <property type="evidence" value="ECO:0007669"/>
    <property type="project" value="UniProtKB-KW"/>
</dbReference>
<dbReference type="GO" id="GO:0103039">
    <property type="term" value="F:protein methylthiotransferase activity"/>
    <property type="evidence" value="ECO:0007669"/>
    <property type="project" value="UniProtKB-EC"/>
</dbReference>
<dbReference type="GO" id="GO:0006400">
    <property type="term" value="P:tRNA modification"/>
    <property type="evidence" value="ECO:0007669"/>
    <property type="project" value="InterPro"/>
</dbReference>
<dbReference type="CDD" id="cd01335">
    <property type="entry name" value="Radical_SAM"/>
    <property type="match status" value="1"/>
</dbReference>
<dbReference type="FunFam" id="3.80.30.20:FF:000001">
    <property type="entry name" value="tRNA-2-methylthio-N(6)-dimethylallyladenosine synthase 2"/>
    <property type="match status" value="1"/>
</dbReference>
<dbReference type="Gene3D" id="3.40.50.12160">
    <property type="entry name" value="Methylthiotransferase, N-terminal domain"/>
    <property type="match status" value="1"/>
</dbReference>
<dbReference type="Gene3D" id="2.40.50.140">
    <property type="entry name" value="Nucleic acid-binding proteins"/>
    <property type="match status" value="1"/>
</dbReference>
<dbReference type="Gene3D" id="3.80.30.20">
    <property type="entry name" value="tm_1862 like domain"/>
    <property type="match status" value="1"/>
</dbReference>
<dbReference type="HAMAP" id="MF_01865">
    <property type="entry name" value="MTTase_RimO"/>
    <property type="match status" value="1"/>
</dbReference>
<dbReference type="InterPro" id="IPR006638">
    <property type="entry name" value="Elp3/MiaA/NifB-like_rSAM"/>
</dbReference>
<dbReference type="InterPro" id="IPR005839">
    <property type="entry name" value="Methylthiotransferase"/>
</dbReference>
<dbReference type="InterPro" id="IPR020612">
    <property type="entry name" value="Methylthiotransferase_CS"/>
</dbReference>
<dbReference type="InterPro" id="IPR013848">
    <property type="entry name" value="Methylthiotransferase_N"/>
</dbReference>
<dbReference type="InterPro" id="IPR038135">
    <property type="entry name" value="Methylthiotransferase_N_sf"/>
</dbReference>
<dbReference type="InterPro" id="IPR012340">
    <property type="entry name" value="NA-bd_OB-fold"/>
</dbReference>
<dbReference type="InterPro" id="IPR005840">
    <property type="entry name" value="Ribosomal_uS12_MeSTrfase_RimO"/>
</dbReference>
<dbReference type="InterPro" id="IPR007197">
    <property type="entry name" value="rSAM"/>
</dbReference>
<dbReference type="InterPro" id="IPR023404">
    <property type="entry name" value="rSAM_horseshoe"/>
</dbReference>
<dbReference type="InterPro" id="IPR002792">
    <property type="entry name" value="TRAM_dom"/>
</dbReference>
<dbReference type="NCBIfam" id="TIGR01125">
    <property type="entry name" value="30S ribosomal protein S12 methylthiotransferase RimO"/>
    <property type="match status" value="1"/>
</dbReference>
<dbReference type="NCBIfam" id="TIGR00089">
    <property type="entry name" value="MiaB/RimO family radical SAM methylthiotransferase"/>
    <property type="match status" value="1"/>
</dbReference>
<dbReference type="PANTHER" id="PTHR43837">
    <property type="entry name" value="RIBOSOMAL PROTEIN S12 METHYLTHIOTRANSFERASE RIMO"/>
    <property type="match status" value="1"/>
</dbReference>
<dbReference type="PANTHER" id="PTHR43837:SF1">
    <property type="entry name" value="RIBOSOMAL PROTEIN US12 METHYLTHIOTRANSFERASE RIMO"/>
    <property type="match status" value="1"/>
</dbReference>
<dbReference type="Pfam" id="PF04055">
    <property type="entry name" value="Radical_SAM"/>
    <property type="match status" value="1"/>
</dbReference>
<dbReference type="Pfam" id="PF18693">
    <property type="entry name" value="TRAM_2"/>
    <property type="match status" value="1"/>
</dbReference>
<dbReference type="Pfam" id="PF00919">
    <property type="entry name" value="UPF0004"/>
    <property type="match status" value="1"/>
</dbReference>
<dbReference type="SFLD" id="SFLDG01082">
    <property type="entry name" value="B12-binding_domain_containing"/>
    <property type="match status" value="1"/>
</dbReference>
<dbReference type="SFLD" id="SFLDS00029">
    <property type="entry name" value="Radical_SAM"/>
    <property type="match status" value="1"/>
</dbReference>
<dbReference type="SFLD" id="SFLDF00274">
    <property type="entry name" value="ribosomal_protein_S12_methylth"/>
    <property type="match status" value="1"/>
</dbReference>
<dbReference type="SMART" id="SM00729">
    <property type="entry name" value="Elp3"/>
    <property type="match status" value="1"/>
</dbReference>
<dbReference type="SUPFAM" id="SSF102114">
    <property type="entry name" value="Radical SAM enzymes"/>
    <property type="match status" value="1"/>
</dbReference>
<dbReference type="PROSITE" id="PS51449">
    <property type="entry name" value="MTTASE_N"/>
    <property type="match status" value="1"/>
</dbReference>
<dbReference type="PROSITE" id="PS01278">
    <property type="entry name" value="MTTASE_RADICAL"/>
    <property type="match status" value="1"/>
</dbReference>
<dbReference type="PROSITE" id="PS51918">
    <property type="entry name" value="RADICAL_SAM"/>
    <property type="match status" value="1"/>
</dbReference>
<dbReference type="PROSITE" id="PS50926">
    <property type="entry name" value="TRAM"/>
    <property type="match status" value="1"/>
</dbReference>
<keyword id="KW-0004">4Fe-4S</keyword>
<keyword id="KW-0963">Cytoplasm</keyword>
<keyword id="KW-0408">Iron</keyword>
<keyword id="KW-0411">Iron-sulfur</keyword>
<keyword id="KW-0479">Metal-binding</keyword>
<keyword id="KW-1185">Reference proteome</keyword>
<keyword id="KW-0949">S-adenosyl-L-methionine</keyword>
<keyword id="KW-0808">Transferase</keyword>
<reference key="1">
    <citation type="submission" date="2007-07" db="EMBL/GenBank/DDBJ databases">
        <title>Complete sequence of Fervidobacterium nodosum Rt17-B1.</title>
        <authorList>
            <consortium name="US DOE Joint Genome Institute"/>
            <person name="Copeland A."/>
            <person name="Lucas S."/>
            <person name="Lapidus A."/>
            <person name="Barry K."/>
            <person name="Glavina del Rio T."/>
            <person name="Dalin E."/>
            <person name="Tice H."/>
            <person name="Pitluck S."/>
            <person name="Saunders E."/>
            <person name="Brettin T."/>
            <person name="Bruce D."/>
            <person name="Detter J.C."/>
            <person name="Han C."/>
            <person name="Schmutz J."/>
            <person name="Larimer F."/>
            <person name="Land M."/>
            <person name="Hauser L."/>
            <person name="Kyrpides N."/>
            <person name="Mikhailova N."/>
            <person name="Nelson K."/>
            <person name="Gogarten J.P."/>
            <person name="Noll K."/>
            <person name="Richardson P."/>
        </authorList>
    </citation>
    <scope>NUCLEOTIDE SEQUENCE [LARGE SCALE GENOMIC DNA]</scope>
    <source>
        <strain>ATCC 35602 / DSM 5306 / Rt17-B1</strain>
    </source>
</reference>